<sequence>ALWKDILKNVGKAAGKAVLNTVTDMVNE</sequence>
<proteinExistence type="evidence at protein level"/>
<protein>
    <recommendedName>
        <fullName evidence="3">Dermaseptin-2.2TR</fullName>
    </recommendedName>
</protein>
<name>DRS22_PHYTB</name>
<reference evidence="4" key="1">
    <citation type="journal article" date="2018" name="Comp. Biochem. Physiol.">
        <title>Peptidomic analysis of the host-defense peptides in skin secretions of the Trinidadian leaf frog Phyllomedusa trinitatis (Phyllomedusidae).</title>
        <authorList>
            <person name="Mechkarska M."/>
            <person name="Coquet L."/>
            <person name="Leprince J."/>
            <person name="Auguste R.J."/>
            <person name="Jouenne T."/>
            <person name="Mangoni M.L."/>
            <person name="Conlon J.M."/>
        </authorList>
    </citation>
    <scope>PROTEIN SEQUENCE</scope>
    <scope>SUBCELLULAR LOCATION</scope>
    <scope>MASS SPECTROMETRY</scope>
    <source>
        <tissue evidence="3">Skin secretion</tissue>
    </source>
</reference>
<organism evidence="3">
    <name type="scientific">Phyllomedusa trinitatis</name>
    <name type="common">Trinidad leaf frog</name>
    <dbReference type="NCBI Taxonomy" id="332092"/>
    <lineage>
        <taxon>Eukaryota</taxon>
        <taxon>Metazoa</taxon>
        <taxon>Chordata</taxon>
        <taxon>Craniata</taxon>
        <taxon>Vertebrata</taxon>
        <taxon>Euteleostomi</taxon>
        <taxon>Amphibia</taxon>
        <taxon>Batrachia</taxon>
        <taxon>Anura</taxon>
        <taxon>Neobatrachia</taxon>
        <taxon>Hyloidea</taxon>
        <taxon>Hylidae</taxon>
        <taxon>Phyllomedusinae</taxon>
        <taxon>Phyllomedusa</taxon>
    </lineage>
</organism>
<dbReference type="SMR" id="C0HLC6"/>
<dbReference type="GO" id="GO:0005576">
    <property type="term" value="C:extracellular region"/>
    <property type="evidence" value="ECO:0007669"/>
    <property type="project" value="UniProtKB-SubCell"/>
</dbReference>
<dbReference type="GO" id="GO:0006952">
    <property type="term" value="P:defense response"/>
    <property type="evidence" value="ECO:0007669"/>
    <property type="project" value="UniProtKB-KW"/>
</dbReference>
<dbReference type="InterPro" id="IPR022731">
    <property type="entry name" value="Dermaseptin_dom"/>
</dbReference>
<dbReference type="Pfam" id="PF12121">
    <property type="entry name" value="DD_K"/>
    <property type="match status" value="1"/>
</dbReference>
<feature type="peptide" id="PRO_0000445212" description="Dermaseptin-2.2TR" evidence="2">
    <location>
        <begin position="1"/>
        <end position="28"/>
    </location>
</feature>
<accession>C0HLC6</accession>
<evidence type="ECO:0000250" key="1">
    <source>
        <dbReference type="UniProtKB" id="P84922"/>
    </source>
</evidence>
<evidence type="ECO:0000269" key="2">
    <source>
    </source>
</evidence>
<evidence type="ECO:0000303" key="3">
    <source>
    </source>
</evidence>
<evidence type="ECO:0000305" key="4"/>
<evidence type="ECO:0000305" key="5">
    <source>
    </source>
</evidence>
<comment type="function">
    <text evidence="1">Has antimicrobial activity.</text>
</comment>
<comment type="subcellular location">
    <subcellularLocation>
        <location evidence="2">Secreted</location>
    </subcellularLocation>
</comment>
<comment type="tissue specificity">
    <text evidence="5">Expressed by the skin glands.</text>
</comment>
<comment type="mass spectrometry"/>
<comment type="similarity">
    <text evidence="4">Belongs to the frog skin active peptide (FSAP) family. Dermaseptin subfamily.</text>
</comment>
<keyword id="KW-0878">Amphibian defense peptide</keyword>
<keyword id="KW-0929">Antimicrobial</keyword>
<keyword id="KW-0903">Direct protein sequencing</keyword>
<keyword id="KW-0964">Secreted</keyword>